<keyword id="KW-0249">Electron transport</keyword>
<keyword id="KW-0349">Heme</keyword>
<keyword id="KW-0408">Iron</keyword>
<keyword id="KW-0472">Membrane</keyword>
<keyword id="KW-0479">Metal-binding</keyword>
<keyword id="KW-0496">Mitochondrion</keyword>
<keyword id="KW-0999">Mitochondrion inner membrane</keyword>
<keyword id="KW-0679">Respiratory chain</keyword>
<keyword id="KW-0812">Transmembrane</keyword>
<keyword id="KW-1133">Transmembrane helix</keyword>
<keyword id="KW-0813">Transport</keyword>
<keyword id="KW-0830">Ubiquinone</keyword>
<proteinExistence type="inferred from homology"/>
<comment type="function">
    <text evidence="2">Component of the ubiquinol-cytochrome c reductase complex (complex III or cytochrome b-c1 complex) that is part of the mitochondrial respiratory chain. The b-c1 complex mediates electron transfer from ubiquinol to cytochrome c. Contributes to the generation of a proton gradient across the mitochondrial membrane that is then used for ATP synthesis.</text>
</comment>
<comment type="cofactor">
    <cofactor evidence="2">
        <name>heme b</name>
        <dbReference type="ChEBI" id="CHEBI:60344"/>
    </cofactor>
    <text evidence="2">Binds 2 heme b groups non-covalently.</text>
</comment>
<comment type="subunit">
    <text evidence="2">The cytochrome bc1 complex contains 11 subunits: 3 respiratory subunits (MT-CYB, CYC1 and UQCRFS1), 2 core proteins (UQCRC1 and UQCRC2) and 6 low-molecular weight proteins (UQCRH/QCR6, UQCRB/QCR7, UQCRQ/QCR8, UQCR10/QCR9, UQCR11/QCR10 and a cleavage product of UQCRFS1). This cytochrome bc1 complex then forms a dimer.</text>
</comment>
<comment type="subcellular location">
    <subcellularLocation>
        <location evidence="2">Mitochondrion inner membrane</location>
        <topology evidence="2">Multi-pass membrane protein</topology>
    </subcellularLocation>
</comment>
<comment type="miscellaneous">
    <text evidence="1">Heme 1 (or BL or b562) is low-potential and absorbs at about 562 nm, and heme 2 (or BH or b566) is high-potential and absorbs at about 566 nm.</text>
</comment>
<comment type="similarity">
    <text evidence="3 4">Belongs to the cytochrome b family.</text>
</comment>
<comment type="caution">
    <text evidence="2">The full-length protein contains only eight transmembrane helices, not nine as predicted by bioinformatics tools.</text>
</comment>
<dbReference type="EMBL" id="AY377327">
    <property type="protein sequence ID" value="AAQ95106.1"/>
    <property type="molecule type" value="Genomic_DNA"/>
</dbReference>
<dbReference type="SMR" id="Q678S3"/>
<dbReference type="GO" id="GO:0005743">
    <property type="term" value="C:mitochondrial inner membrane"/>
    <property type="evidence" value="ECO:0007669"/>
    <property type="project" value="UniProtKB-SubCell"/>
</dbReference>
<dbReference type="GO" id="GO:0045275">
    <property type="term" value="C:respiratory chain complex III"/>
    <property type="evidence" value="ECO:0007669"/>
    <property type="project" value="InterPro"/>
</dbReference>
<dbReference type="GO" id="GO:0046872">
    <property type="term" value="F:metal ion binding"/>
    <property type="evidence" value="ECO:0007669"/>
    <property type="project" value="UniProtKB-KW"/>
</dbReference>
<dbReference type="GO" id="GO:0008121">
    <property type="term" value="F:ubiquinol-cytochrome-c reductase activity"/>
    <property type="evidence" value="ECO:0007669"/>
    <property type="project" value="InterPro"/>
</dbReference>
<dbReference type="GO" id="GO:0006122">
    <property type="term" value="P:mitochondrial electron transport, ubiquinol to cytochrome c"/>
    <property type="evidence" value="ECO:0007669"/>
    <property type="project" value="TreeGrafter"/>
</dbReference>
<dbReference type="CDD" id="cd00290">
    <property type="entry name" value="cytochrome_b_C"/>
    <property type="match status" value="1"/>
</dbReference>
<dbReference type="CDD" id="cd00284">
    <property type="entry name" value="Cytochrome_b_N"/>
    <property type="match status" value="1"/>
</dbReference>
<dbReference type="FunFam" id="1.20.810.10:FF:000002">
    <property type="entry name" value="Cytochrome b"/>
    <property type="match status" value="1"/>
</dbReference>
<dbReference type="Gene3D" id="1.20.810.10">
    <property type="entry name" value="Cytochrome Bc1 Complex, Chain C"/>
    <property type="match status" value="1"/>
</dbReference>
<dbReference type="InterPro" id="IPR005798">
    <property type="entry name" value="Cyt_b/b6_C"/>
</dbReference>
<dbReference type="InterPro" id="IPR036150">
    <property type="entry name" value="Cyt_b/b6_C_sf"/>
</dbReference>
<dbReference type="InterPro" id="IPR005797">
    <property type="entry name" value="Cyt_b/b6_N"/>
</dbReference>
<dbReference type="InterPro" id="IPR027387">
    <property type="entry name" value="Cytb/b6-like_sf"/>
</dbReference>
<dbReference type="InterPro" id="IPR030689">
    <property type="entry name" value="Cytochrome_b"/>
</dbReference>
<dbReference type="InterPro" id="IPR048260">
    <property type="entry name" value="Cytochrome_b_C_euk/bac"/>
</dbReference>
<dbReference type="InterPro" id="IPR048259">
    <property type="entry name" value="Cytochrome_b_N_euk/bac"/>
</dbReference>
<dbReference type="InterPro" id="IPR016174">
    <property type="entry name" value="Di-haem_cyt_TM"/>
</dbReference>
<dbReference type="PANTHER" id="PTHR19271">
    <property type="entry name" value="CYTOCHROME B"/>
    <property type="match status" value="1"/>
</dbReference>
<dbReference type="PANTHER" id="PTHR19271:SF16">
    <property type="entry name" value="CYTOCHROME B"/>
    <property type="match status" value="1"/>
</dbReference>
<dbReference type="Pfam" id="PF00032">
    <property type="entry name" value="Cytochrom_B_C"/>
    <property type="match status" value="1"/>
</dbReference>
<dbReference type="Pfam" id="PF00033">
    <property type="entry name" value="Cytochrome_B"/>
    <property type="match status" value="1"/>
</dbReference>
<dbReference type="PIRSF" id="PIRSF038885">
    <property type="entry name" value="COB"/>
    <property type="match status" value="1"/>
</dbReference>
<dbReference type="SUPFAM" id="SSF81648">
    <property type="entry name" value="a domain/subunit of cytochrome bc1 complex (Ubiquinol-cytochrome c reductase)"/>
    <property type="match status" value="1"/>
</dbReference>
<dbReference type="SUPFAM" id="SSF81342">
    <property type="entry name" value="Transmembrane di-heme cytochromes"/>
    <property type="match status" value="1"/>
</dbReference>
<dbReference type="PROSITE" id="PS51003">
    <property type="entry name" value="CYTB_CTER"/>
    <property type="match status" value="1"/>
</dbReference>
<dbReference type="PROSITE" id="PS51002">
    <property type="entry name" value="CYTB_NTER"/>
    <property type="match status" value="1"/>
</dbReference>
<organism>
    <name type="scientific">Monachus monachus</name>
    <name type="common">Mediterranean monk seal</name>
    <dbReference type="NCBI Taxonomy" id="248254"/>
    <lineage>
        <taxon>Eukaryota</taxon>
        <taxon>Metazoa</taxon>
        <taxon>Chordata</taxon>
        <taxon>Craniata</taxon>
        <taxon>Vertebrata</taxon>
        <taxon>Euteleostomi</taxon>
        <taxon>Mammalia</taxon>
        <taxon>Eutheria</taxon>
        <taxon>Laurasiatheria</taxon>
        <taxon>Carnivora</taxon>
        <taxon>Caniformia</taxon>
        <taxon>Pinnipedia</taxon>
        <taxon>Phocidae</taxon>
        <taxon>Monachinae</taxon>
        <taxon>Monachini</taxon>
        <taxon>Monachus</taxon>
    </lineage>
</organism>
<name>CYB_MONMN</name>
<reference key="1">
    <citation type="journal article" date="2004" name="Mol. Phylogenet. Evol.">
        <title>A phylogeny of the extant Phocidae inferred from complete mitochondrial DNA coding regions.</title>
        <authorList>
            <person name="Davis C.S."/>
            <person name="Delisle I."/>
            <person name="Stirling I."/>
            <person name="Siniff D.B."/>
            <person name="Strobeck C."/>
        </authorList>
    </citation>
    <scope>NUCLEOTIDE SEQUENCE [GENOMIC DNA]</scope>
</reference>
<sequence length="379" mass="42542">MTNIRKTHPLAKIINNSLIDLPAPSNISAWWNFGSLLGICLILQILTGLFLAMHYTPDTTTAFSSVAHICRDVNYGWIIRYMHANGASMFFICLYMHVGRGLYYGSYTFTETWNIGIILLLTIMATAFMGYVLPWGQMSFWGATVITNLLSAIPYIGTDLVQWIWGGFSVDKATLTRFFAFHFILPFMVSALVAVHLLFLHETGSNNPSGIPSNSDKIPFHPYYTIKDILGALLLIMILLLLALFSPDLLGDPDNYTPANPLSTPPHIKPEWYFLFAYAILRSIPNKLGGVLALMLSILILAIIPLLHTSKQRGMMFRPISQCLFWLLVADLLTLTWIGGQPVEHPYIIIGQLASILYFTILLVLMPIISIIENSILKW</sequence>
<protein>
    <recommendedName>
        <fullName>Cytochrome b</fullName>
    </recommendedName>
    <alternativeName>
        <fullName>Complex III subunit 3</fullName>
    </alternativeName>
    <alternativeName>
        <fullName>Complex III subunit III</fullName>
    </alternativeName>
    <alternativeName>
        <fullName>Cytochrome b-c1 complex subunit 3</fullName>
    </alternativeName>
    <alternativeName>
        <fullName>Ubiquinol-cytochrome-c reductase complex cytochrome b subunit</fullName>
    </alternativeName>
</protein>
<evidence type="ECO:0000250" key="1"/>
<evidence type="ECO:0000250" key="2">
    <source>
        <dbReference type="UniProtKB" id="P00157"/>
    </source>
</evidence>
<evidence type="ECO:0000255" key="3">
    <source>
        <dbReference type="PROSITE-ProRule" id="PRU00967"/>
    </source>
</evidence>
<evidence type="ECO:0000255" key="4">
    <source>
        <dbReference type="PROSITE-ProRule" id="PRU00968"/>
    </source>
</evidence>
<gene>
    <name type="primary">MT-CYB</name>
    <name type="synonym">COB</name>
    <name type="synonym">CYTB</name>
    <name type="synonym">MTCYB</name>
</gene>
<accession>Q678S3</accession>
<geneLocation type="mitochondrion"/>
<feature type="chain" id="PRO_0000061201" description="Cytochrome b">
    <location>
        <begin position="1"/>
        <end position="379"/>
    </location>
</feature>
<feature type="transmembrane region" description="Helical" evidence="2">
    <location>
        <begin position="33"/>
        <end position="53"/>
    </location>
</feature>
<feature type="transmembrane region" description="Helical" evidence="2">
    <location>
        <begin position="77"/>
        <end position="98"/>
    </location>
</feature>
<feature type="transmembrane region" description="Helical" evidence="2">
    <location>
        <begin position="113"/>
        <end position="133"/>
    </location>
</feature>
<feature type="transmembrane region" description="Helical" evidence="2">
    <location>
        <begin position="178"/>
        <end position="198"/>
    </location>
</feature>
<feature type="transmembrane region" description="Helical" evidence="2">
    <location>
        <begin position="226"/>
        <end position="246"/>
    </location>
</feature>
<feature type="transmembrane region" description="Helical" evidence="2">
    <location>
        <begin position="288"/>
        <end position="308"/>
    </location>
</feature>
<feature type="transmembrane region" description="Helical" evidence="2">
    <location>
        <begin position="320"/>
        <end position="340"/>
    </location>
</feature>
<feature type="transmembrane region" description="Helical" evidence="2">
    <location>
        <begin position="347"/>
        <end position="367"/>
    </location>
</feature>
<feature type="binding site" description="axial binding residue" evidence="2">
    <location>
        <position position="83"/>
    </location>
    <ligand>
        <name>heme b</name>
        <dbReference type="ChEBI" id="CHEBI:60344"/>
        <label>b562</label>
    </ligand>
    <ligandPart>
        <name>Fe</name>
        <dbReference type="ChEBI" id="CHEBI:18248"/>
    </ligandPart>
</feature>
<feature type="binding site" description="axial binding residue" evidence="2">
    <location>
        <position position="97"/>
    </location>
    <ligand>
        <name>heme b</name>
        <dbReference type="ChEBI" id="CHEBI:60344"/>
        <label>b566</label>
    </ligand>
    <ligandPart>
        <name>Fe</name>
        <dbReference type="ChEBI" id="CHEBI:18248"/>
    </ligandPart>
</feature>
<feature type="binding site" description="axial binding residue" evidence="2">
    <location>
        <position position="182"/>
    </location>
    <ligand>
        <name>heme b</name>
        <dbReference type="ChEBI" id="CHEBI:60344"/>
        <label>b562</label>
    </ligand>
    <ligandPart>
        <name>Fe</name>
        <dbReference type="ChEBI" id="CHEBI:18248"/>
    </ligandPart>
</feature>
<feature type="binding site" description="axial binding residue" evidence="2">
    <location>
        <position position="196"/>
    </location>
    <ligand>
        <name>heme b</name>
        <dbReference type="ChEBI" id="CHEBI:60344"/>
        <label>b566</label>
    </ligand>
    <ligandPart>
        <name>Fe</name>
        <dbReference type="ChEBI" id="CHEBI:18248"/>
    </ligandPart>
</feature>
<feature type="binding site" evidence="2">
    <location>
        <position position="201"/>
    </location>
    <ligand>
        <name>a ubiquinone</name>
        <dbReference type="ChEBI" id="CHEBI:16389"/>
    </ligand>
</feature>